<proteinExistence type="inferred from homology"/>
<name>SSRP_MYCUA</name>
<gene>
    <name evidence="1" type="primary">smpB</name>
    <name type="ordered locus">MUL_2407</name>
</gene>
<evidence type="ECO:0000255" key="1">
    <source>
        <dbReference type="HAMAP-Rule" id="MF_00023"/>
    </source>
</evidence>
<evidence type="ECO:0000256" key="2">
    <source>
        <dbReference type="SAM" id="MobiDB-lite"/>
    </source>
</evidence>
<sequence length="168" mass="19136">MAAQSKQAKPSGKQGGKKIIATNRKARHNYSIIEVFEAGVALQGTEVKSLRERHASLVDAFATVDDGEVWLRNLHIPEYLHGTWTNHEPRRNRKLLLHRRQIDTLFGKIREGNFALVPLSMYFLDGKVKVELALARGKHAHDKRQDLARRDAQREVIRELGRRAKGMG</sequence>
<organism>
    <name type="scientific">Mycobacterium ulcerans (strain Agy99)</name>
    <dbReference type="NCBI Taxonomy" id="362242"/>
    <lineage>
        <taxon>Bacteria</taxon>
        <taxon>Bacillati</taxon>
        <taxon>Actinomycetota</taxon>
        <taxon>Actinomycetes</taxon>
        <taxon>Mycobacteriales</taxon>
        <taxon>Mycobacteriaceae</taxon>
        <taxon>Mycobacterium</taxon>
        <taxon>Mycobacterium ulcerans group</taxon>
    </lineage>
</organism>
<accession>A0PQZ1</accession>
<keyword id="KW-0963">Cytoplasm</keyword>
<keyword id="KW-0694">RNA-binding</keyword>
<reference key="1">
    <citation type="journal article" date="2007" name="Genome Res.">
        <title>Reductive evolution and niche adaptation inferred from the genome of Mycobacterium ulcerans, the causative agent of Buruli ulcer.</title>
        <authorList>
            <person name="Stinear T.P."/>
            <person name="Seemann T."/>
            <person name="Pidot S."/>
            <person name="Frigui W."/>
            <person name="Reysset G."/>
            <person name="Garnier T."/>
            <person name="Meurice G."/>
            <person name="Simon D."/>
            <person name="Bouchier C."/>
            <person name="Ma L."/>
            <person name="Tichit M."/>
            <person name="Porter J.L."/>
            <person name="Ryan J."/>
            <person name="Johnson P.D.R."/>
            <person name="Davies J.K."/>
            <person name="Jenkin G.A."/>
            <person name="Small P.L.C."/>
            <person name="Jones L.M."/>
            <person name="Tekaia F."/>
            <person name="Laval F."/>
            <person name="Daffe M."/>
            <person name="Parkhill J."/>
            <person name="Cole S.T."/>
        </authorList>
    </citation>
    <scope>NUCLEOTIDE SEQUENCE [LARGE SCALE GENOMIC DNA]</scope>
    <source>
        <strain>Agy99</strain>
    </source>
</reference>
<dbReference type="EMBL" id="CP000325">
    <property type="protein sequence ID" value="ABL04760.1"/>
    <property type="molecule type" value="Genomic_DNA"/>
</dbReference>
<dbReference type="RefSeq" id="WP_011740375.1">
    <property type="nucleotide sequence ID" value="NC_008611.1"/>
</dbReference>
<dbReference type="SMR" id="A0PQZ1"/>
<dbReference type="KEGG" id="mul:MUL_2407"/>
<dbReference type="eggNOG" id="COG0691">
    <property type="taxonomic scope" value="Bacteria"/>
</dbReference>
<dbReference type="HOGENOM" id="CLU_108953_2_1_11"/>
<dbReference type="Proteomes" id="UP000000765">
    <property type="component" value="Chromosome"/>
</dbReference>
<dbReference type="GO" id="GO:0005829">
    <property type="term" value="C:cytosol"/>
    <property type="evidence" value="ECO:0007669"/>
    <property type="project" value="TreeGrafter"/>
</dbReference>
<dbReference type="GO" id="GO:0003723">
    <property type="term" value="F:RNA binding"/>
    <property type="evidence" value="ECO:0007669"/>
    <property type="project" value="UniProtKB-UniRule"/>
</dbReference>
<dbReference type="GO" id="GO:0070929">
    <property type="term" value="P:trans-translation"/>
    <property type="evidence" value="ECO:0007669"/>
    <property type="project" value="UniProtKB-UniRule"/>
</dbReference>
<dbReference type="CDD" id="cd09294">
    <property type="entry name" value="SmpB"/>
    <property type="match status" value="1"/>
</dbReference>
<dbReference type="Gene3D" id="2.40.280.10">
    <property type="match status" value="1"/>
</dbReference>
<dbReference type="HAMAP" id="MF_00023">
    <property type="entry name" value="SmpB"/>
    <property type="match status" value="1"/>
</dbReference>
<dbReference type="InterPro" id="IPR023620">
    <property type="entry name" value="SmpB"/>
</dbReference>
<dbReference type="InterPro" id="IPR000037">
    <property type="entry name" value="SsrA-bd_prot"/>
</dbReference>
<dbReference type="InterPro" id="IPR020081">
    <property type="entry name" value="SsrA-bd_prot_CS"/>
</dbReference>
<dbReference type="NCBIfam" id="NF003843">
    <property type="entry name" value="PRK05422.1"/>
    <property type="match status" value="1"/>
</dbReference>
<dbReference type="NCBIfam" id="TIGR00086">
    <property type="entry name" value="smpB"/>
    <property type="match status" value="1"/>
</dbReference>
<dbReference type="PANTHER" id="PTHR30308:SF2">
    <property type="entry name" value="SSRA-BINDING PROTEIN"/>
    <property type="match status" value="1"/>
</dbReference>
<dbReference type="PANTHER" id="PTHR30308">
    <property type="entry name" value="TMRNA-BINDING COMPONENT OF TRANS-TRANSLATION TAGGING COMPLEX"/>
    <property type="match status" value="1"/>
</dbReference>
<dbReference type="Pfam" id="PF01668">
    <property type="entry name" value="SmpB"/>
    <property type="match status" value="1"/>
</dbReference>
<dbReference type="SUPFAM" id="SSF74982">
    <property type="entry name" value="Small protein B (SmpB)"/>
    <property type="match status" value="1"/>
</dbReference>
<dbReference type="PROSITE" id="PS01317">
    <property type="entry name" value="SSRP"/>
    <property type="match status" value="1"/>
</dbReference>
<feature type="chain" id="PRO_1000002088" description="SsrA-binding protein">
    <location>
        <begin position="1"/>
        <end position="168"/>
    </location>
</feature>
<feature type="region of interest" description="Disordered" evidence="2">
    <location>
        <begin position="1"/>
        <end position="20"/>
    </location>
</feature>
<protein>
    <recommendedName>
        <fullName evidence="1">SsrA-binding protein</fullName>
    </recommendedName>
    <alternativeName>
        <fullName evidence="1">Small protein B</fullName>
    </alternativeName>
</protein>
<comment type="function">
    <text evidence="1">Required for rescue of stalled ribosomes mediated by trans-translation. Binds to transfer-messenger RNA (tmRNA), required for stable association of tmRNA with ribosomes. tmRNA and SmpB together mimic tRNA shape, replacing the anticodon stem-loop with SmpB. tmRNA is encoded by the ssrA gene; the 2 termini fold to resemble tRNA(Ala) and it encodes a 'tag peptide', a short internal open reading frame. During trans-translation Ala-aminoacylated tmRNA acts like a tRNA, entering the A-site of stalled ribosomes, displacing the stalled mRNA. The ribosome then switches to translate the ORF on the tmRNA; the nascent peptide is terminated with the 'tag peptide' encoded by the tmRNA and targeted for degradation. The ribosome is freed to recommence translation, which seems to be the essential function of trans-translation.</text>
</comment>
<comment type="subcellular location">
    <subcellularLocation>
        <location evidence="1">Cytoplasm</location>
    </subcellularLocation>
    <text evidence="1">The tmRNA-SmpB complex associates with stalled 70S ribosomes.</text>
</comment>
<comment type="similarity">
    <text evidence="1">Belongs to the SmpB family.</text>
</comment>